<sequence length="531" mass="59012">MGTDSTELSEFEKQRLANIAERDALLKKLTLDAQSSGIFPPKLARSSPVSQTKPKKKPAPKKIKKEGEAPVARRMSSRLRGIAAESEVAKRKAEEHYEAVQQAERAKRVRKSDAFSFSEMLVSGQKLSADGLIGVDVVTKGVAMPYQRTFGDEDIEKTADKELKRLREEVSGLQLWEAWEPNRIKVTPERIYTMTFHPSEAKPLIFAGDKMGNLGVLDASQERPVSSIKHEDGDEEEQEDDDDPDPVLTTLKPHTRTISSMHIHPSKPTHLYTASYDSSIRELDLEKTTSVETYAPDSPSDDVPISGIDMAADDPNTLYWTTLDGAFGRYDTRASRRTAVATWQLSEKKIGGFSLYPTHPHFFATASLDRTMRLWDLRKLSHDDPLPVGEHLSRLSVSHAAFNSAGQVATSSYDDSLKIYDFGAKGIASWEQGHTLSDAEMKPDTVVRHNCQTGRWVTILRPQWQANPQSHIQRFCIGNMNRFVDVYSSSGDQLAQLGGDGITAVPAVAVFHRSKNWIAGGTASGKICLWM</sequence>
<organism>
    <name type="scientific">Aspergillus clavatus (strain ATCC 1007 / CBS 513.65 / DSM 816 / NCTC 3887 / NRRL 1 / QM 1276 / 107)</name>
    <dbReference type="NCBI Taxonomy" id="344612"/>
    <lineage>
        <taxon>Eukaryota</taxon>
        <taxon>Fungi</taxon>
        <taxon>Dikarya</taxon>
        <taxon>Ascomycota</taxon>
        <taxon>Pezizomycotina</taxon>
        <taxon>Eurotiomycetes</taxon>
        <taxon>Eurotiomycetidae</taxon>
        <taxon>Eurotiales</taxon>
        <taxon>Aspergillaceae</taxon>
        <taxon>Aspergillus</taxon>
        <taxon>Aspergillus subgen. Fumigati</taxon>
    </lineage>
</organism>
<dbReference type="EMBL" id="DS027060">
    <property type="protein sequence ID" value="EAW06862.1"/>
    <property type="molecule type" value="Genomic_DNA"/>
</dbReference>
<dbReference type="RefSeq" id="XP_001268288.1">
    <property type="nucleotide sequence ID" value="XM_001268287.1"/>
</dbReference>
<dbReference type="SMR" id="A1CU75"/>
<dbReference type="STRING" id="344612.A1CU75"/>
<dbReference type="EnsemblFungi" id="EAW06862">
    <property type="protein sequence ID" value="EAW06862"/>
    <property type="gene ID" value="ACLA_085580"/>
</dbReference>
<dbReference type="GeneID" id="4700440"/>
<dbReference type="KEGG" id="act:ACLA_085580"/>
<dbReference type="VEuPathDB" id="FungiDB:ACLA_085580"/>
<dbReference type="eggNOG" id="KOG4328">
    <property type="taxonomic scope" value="Eukaryota"/>
</dbReference>
<dbReference type="HOGENOM" id="CLU_017019_1_1_1"/>
<dbReference type="OMA" id="DPNTLYW"/>
<dbReference type="OrthoDB" id="9890280at2759"/>
<dbReference type="Proteomes" id="UP000006701">
    <property type="component" value="Unassembled WGS sequence"/>
</dbReference>
<dbReference type="GO" id="GO:0005634">
    <property type="term" value="C:nucleus"/>
    <property type="evidence" value="ECO:0007669"/>
    <property type="project" value="TreeGrafter"/>
</dbReference>
<dbReference type="GO" id="GO:0003677">
    <property type="term" value="F:DNA binding"/>
    <property type="evidence" value="ECO:0007669"/>
    <property type="project" value="UniProtKB-KW"/>
</dbReference>
<dbReference type="GO" id="GO:0006974">
    <property type="term" value="P:DNA damage response"/>
    <property type="evidence" value="ECO:0007669"/>
    <property type="project" value="UniProtKB-KW"/>
</dbReference>
<dbReference type="GO" id="GO:2000001">
    <property type="term" value="P:regulation of DNA damage checkpoint"/>
    <property type="evidence" value="ECO:0007669"/>
    <property type="project" value="TreeGrafter"/>
</dbReference>
<dbReference type="FunFam" id="2.130.10.10:FF:000562">
    <property type="entry name" value="DNA damage-binding protein CMR1"/>
    <property type="match status" value="1"/>
</dbReference>
<dbReference type="Gene3D" id="2.130.10.10">
    <property type="entry name" value="YVTN repeat-like/Quinoprotein amine dehydrogenase"/>
    <property type="match status" value="1"/>
</dbReference>
<dbReference type="InterPro" id="IPR015943">
    <property type="entry name" value="WD40/YVTN_repeat-like_dom_sf"/>
</dbReference>
<dbReference type="InterPro" id="IPR036322">
    <property type="entry name" value="WD40_repeat_dom_sf"/>
</dbReference>
<dbReference type="InterPro" id="IPR001680">
    <property type="entry name" value="WD40_rpt"/>
</dbReference>
<dbReference type="InterPro" id="IPR050853">
    <property type="entry name" value="WD_repeat_DNA-damage-binding"/>
</dbReference>
<dbReference type="PANTHER" id="PTHR14773">
    <property type="entry name" value="WD REPEAT-CONTAINING PROTEIN 76"/>
    <property type="match status" value="1"/>
</dbReference>
<dbReference type="PANTHER" id="PTHR14773:SF0">
    <property type="entry name" value="WD REPEAT-CONTAINING PROTEIN 76"/>
    <property type="match status" value="1"/>
</dbReference>
<dbReference type="Pfam" id="PF00400">
    <property type="entry name" value="WD40"/>
    <property type="match status" value="2"/>
</dbReference>
<dbReference type="SMART" id="SM00320">
    <property type="entry name" value="WD40"/>
    <property type="match status" value="4"/>
</dbReference>
<dbReference type="SUPFAM" id="SSF50978">
    <property type="entry name" value="WD40 repeat-like"/>
    <property type="match status" value="1"/>
</dbReference>
<dbReference type="PROSITE" id="PS50082">
    <property type="entry name" value="WD_REPEATS_2"/>
    <property type="match status" value="1"/>
</dbReference>
<dbReference type="PROSITE" id="PS50294">
    <property type="entry name" value="WD_REPEATS_REGION"/>
    <property type="match status" value="1"/>
</dbReference>
<gene>
    <name type="ORF">ACLA_085580</name>
</gene>
<keyword id="KW-0227">DNA damage</keyword>
<keyword id="KW-0238">DNA-binding</keyword>
<keyword id="KW-1185">Reference proteome</keyword>
<keyword id="KW-0677">Repeat</keyword>
<keyword id="KW-0853">WD repeat</keyword>
<proteinExistence type="inferred from homology"/>
<feature type="chain" id="PRO_0000351097" description="DNA damage-binding protein cmr1">
    <location>
        <begin position="1"/>
        <end position="531"/>
    </location>
</feature>
<feature type="repeat" description="WD 1" evidence="2">
    <location>
        <begin position="186"/>
        <end position="227"/>
    </location>
</feature>
<feature type="repeat" description="WD 2" evidence="2">
    <location>
        <begin position="253"/>
        <end position="293"/>
    </location>
</feature>
<feature type="repeat" description="WD 3" evidence="2">
    <location>
        <begin position="300"/>
        <end position="340"/>
    </location>
</feature>
<feature type="repeat" description="WD 4" evidence="2">
    <location>
        <begin position="345"/>
        <end position="385"/>
    </location>
</feature>
<feature type="repeat" description="WD 5" evidence="2">
    <location>
        <begin position="392"/>
        <end position="431"/>
    </location>
</feature>
<feature type="repeat" description="WD 6" evidence="2">
    <location>
        <begin position="454"/>
        <end position="497"/>
    </location>
</feature>
<feature type="repeat" description="WD 7" evidence="2">
    <location>
        <begin position="500"/>
        <end position="531"/>
    </location>
</feature>
<feature type="region of interest" description="Disordered" evidence="3">
    <location>
        <begin position="37"/>
        <end position="83"/>
    </location>
</feature>
<feature type="region of interest" description="Disordered" evidence="3">
    <location>
        <begin position="218"/>
        <end position="264"/>
    </location>
</feature>
<feature type="compositionally biased region" description="Basic residues" evidence="3">
    <location>
        <begin position="53"/>
        <end position="64"/>
    </location>
</feature>
<feature type="compositionally biased region" description="Acidic residues" evidence="3">
    <location>
        <begin position="233"/>
        <end position="245"/>
    </location>
</feature>
<name>CMR1_ASPCL</name>
<evidence type="ECO:0000250" key="1">
    <source>
        <dbReference type="UniProtKB" id="Q12510"/>
    </source>
</evidence>
<evidence type="ECO:0000255" key="2"/>
<evidence type="ECO:0000256" key="3">
    <source>
        <dbReference type="SAM" id="MobiDB-lite"/>
    </source>
</evidence>
<evidence type="ECO:0000305" key="4"/>
<comment type="function">
    <text evidence="1">DNA-binding protein that binds to both single- and double-stranded DNA. Binds preferentially to UV-damaged DNA. May be involved in DNA-metabolic processes.</text>
</comment>
<comment type="similarity">
    <text evidence="4">Belongs to the WD repeat DDB2/WDR76 family.</text>
</comment>
<accession>A1CU75</accession>
<reference key="1">
    <citation type="journal article" date="2008" name="PLoS Genet.">
        <title>Genomic islands in the pathogenic filamentous fungus Aspergillus fumigatus.</title>
        <authorList>
            <person name="Fedorova N.D."/>
            <person name="Khaldi N."/>
            <person name="Joardar V.S."/>
            <person name="Maiti R."/>
            <person name="Amedeo P."/>
            <person name="Anderson M.J."/>
            <person name="Crabtree J."/>
            <person name="Silva J.C."/>
            <person name="Badger J.H."/>
            <person name="Albarraq A."/>
            <person name="Angiuoli S."/>
            <person name="Bussey H."/>
            <person name="Bowyer P."/>
            <person name="Cotty P.J."/>
            <person name="Dyer P.S."/>
            <person name="Egan A."/>
            <person name="Galens K."/>
            <person name="Fraser-Liggett C.M."/>
            <person name="Haas B.J."/>
            <person name="Inman J.M."/>
            <person name="Kent R."/>
            <person name="Lemieux S."/>
            <person name="Malavazi I."/>
            <person name="Orvis J."/>
            <person name="Roemer T."/>
            <person name="Ronning C.M."/>
            <person name="Sundaram J.P."/>
            <person name="Sutton G."/>
            <person name="Turner G."/>
            <person name="Venter J.C."/>
            <person name="White O.R."/>
            <person name="Whitty B.R."/>
            <person name="Youngman P."/>
            <person name="Wolfe K.H."/>
            <person name="Goldman G.H."/>
            <person name="Wortman J.R."/>
            <person name="Jiang B."/>
            <person name="Denning D.W."/>
            <person name="Nierman W.C."/>
        </authorList>
    </citation>
    <scope>NUCLEOTIDE SEQUENCE [LARGE SCALE GENOMIC DNA]</scope>
    <source>
        <strain>ATCC 1007 / CBS 513.65 / DSM 816 / NCTC 3887 / NRRL 1 / QM 1276 / 107</strain>
    </source>
</reference>
<protein>
    <recommendedName>
        <fullName evidence="1">DNA damage-binding protein cmr1</fullName>
    </recommendedName>
</protein>